<organism>
    <name type="scientific">Arabidopsis thaliana</name>
    <name type="common">Mouse-ear cress</name>
    <dbReference type="NCBI Taxonomy" id="3702"/>
    <lineage>
        <taxon>Eukaryota</taxon>
        <taxon>Viridiplantae</taxon>
        <taxon>Streptophyta</taxon>
        <taxon>Embryophyta</taxon>
        <taxon>Tracheophyta</taxon>
        <taxon>Spermatophyta</taxon>
        <taxon>Magnoliopsida</taxon>
        <taxon>eudicotyledons</taxon>
        <taxon>Gunneridae</taxon>
        <taxon>Pentapetalae</taxon>
        <taxon>rosids</taxon>
        <taxon>malvids</taxon>
        <taxon>Brassicales</taxon>
        <taxon>Brassicaceae</taxon>
        <taxon>Camelineae</taxon>
        <taxon>Arabidopsis</taxon>
    </lineage>
</organism>
<sequence>MTRRAEFEMGLFVILQSMFLISLCSSQKPEEFLPEISPDTSPQPFLPFIAPSPMVPYINSTMPKLSGLCSLNFSASESLIQTTSHNCWTVFAPLLANVMCCPQLDATLTIILGKASKETGLLALNRTQSKHCLSDLEQILVGKGASGQLNKICSIHSSNLTSSSCPVINVDEFESTVDTAKLLLACEKIDPVKECCEEACQNAILDAATNISLKASETLTDNSDRINDCKNVVNRWLATKLDPSRVKETLRGLANCKINRVCPLVFPHMKHIGGNCSNELSNQTGCCRAMESYVSHLQKQTLITNLQALDCATSLGTKLQKLNITKNIFSVCHISLKDFSLQVGNQESGCLLPSLPSDAIFDKDTGISFTCDLNDNIPAPWPSSSLSSASTCKKPVRIPALPAAASSQPRLHDEGVTRLVIFVLSMLLVMLLS</sequence>
<reference key="1">
    <citation type="journal article" date="2000" name="Nature">
        <title>Sequence and analysis of chromosome 1 of the plant Arabidopsis thaliana.</title>
        <authorList>
            <person name="Theologis A."/>
            <person name="Ecker J.R."/>
            <person name="Palm C.J."/>
            <person name="Federspiel N.A."/>
            <person name="Kaul S."/>
            <person name="White O."/>
            <person name="Alonso J."/>
            <person name="Altafi H."/>
            <person name="Araujo R."/>
            <person name="Bowman C.L."/>
            <person name="Brooks S.Y."/>
            <person name="Buehler E."/>
            <person name="Chan A."/>
            <person name="Chao Q."/>
            <person name="Chen H."/>
            <person name="Cheuk R.F."/>
            <person name="Chin C.W."/>
            <person name="Chung M.K."/>
            <person name="Conn L."/>
            <person name="Conway A.B."/>
            <person name="Conway A.R."/>
            <person name="Creasy T.H."/>
            <person name="Dewar K."/>
            <person name="Dunn P."/>
            <person name="Etgu P."/>
            <person name="Feldblyum T.V."/>
            <person name="Feng J.-D."/>
            <person name="Fong B."/>
            <person name="Fujii C.Y."/>
            <person name="Gill J.E."/>
            <person name="Goldsmith A.D."/>
            <person name="Haas B."/>
            <person name="Hansen N.F."/>
            <person name="Hughes B."/>
            <person name="Huizar L."/>
            <person name="Hunter J.L."/>
            <person name="Jenkins J."/>
            <person name="Johnson-Hopson C."/>
            <person name="Khan S."/>
            <person name="Khaykin E."/>
            <person name="Kim C.J."/>
            <person name="Koo H.L."/>
            <person name="Kremenetskaia I."/>
            <person name="Kurtz D.B."/>
            <person name="Kwan A."/>
            <person name="Lam B."/>
            <person name="Langin-Hooper S."/>
            <person name="Lee A."/>
            <person name="Lee J.M."/>
            <person name="Lenz C.A."/>
            <person name="Li J.H."/>
            <person name="Li Y.-P."/>
            <person name="Lin X."/>
            <person name="Liu S.X."/>
            <person name="Liu Z.A."/>
            <person name="Luros J.S."/>
            <person name="Maiti R."/>
            <person name="Marziali A."/>
            <person name="Militscher J."/>
            <person name="Miranda M."/>
            <person name="Nguyen M."/>
            <person name="Nierman W.C."/>
            <person name="Osborne B.I."/>
            <person name="Pai G."/>
            <person name="Peterson J."/>
            <person name="Pham P.K."/>
            <person name="Rizzo M."/>
            <person name="Rooney T."/>
            <person name="Rowley D."/>
            <person name="Sakano H."/>
            <person name="Salzberg S.L."/>
            <person name="Schwartz J.R."/>
            <person name="Shinn P."/>
            <person name="Southwick A.M."/>
            <person name="Sun H."/>
            <person name="Tallon L.J."/>
            <person name="Tambunga G."/>
            <person name="Toriumi M.J."/>
            <person name="Town C.D."/>
            <person name="Utterback T."/>
            <person name="Van Aken S."/>
            <person name="Vaysberg M."/>
            <person name="Vysotskaia V.S."/>
            <person name="Walker M."/>
            <person name="Wu D."/>
            <person name="Yu G."/>
            <person name="Fraser C.M."/>
            <person name="Venter J.C."/>
            <person name="Davis R.W."/>
        </authorList>
    </citation>
    <scope>NUCLEOTIDE SEQUENCE [LARGE SCALE GENOMIC DNA]</scope>
    <source>
        <strain>cv. Columbia</strain>
    </source>
</reference>
<reference key="2">
    <citation type="journal article" date="2017" name="Plant J.">
        <title>Araport11: a complete reannotation of the Arabidopsis thaliana reference genome.</title>
        <authorList>
            <person name="Cheng C.Y."/>
            <person name="Krishnakumar V."/>
            <person name="Chan A.P."/>
            <person name="Thibaud-Nissen F."/>
            <person name="Schobel S."/>
            <person name="Town C.D."/>
        </authorList>
    </citation>
    <scope>GENOME REANNOTATION</scope>
    <source>
        <strain>cv. Columbia</strain>
    </source>
</reference>
<reference key="3">
    <citation type="journal article" date="2003" name="Science">
        <title>Empirical analysis of transcriptional activity in the Arabidopsis genome.</title>
        <authorList>
            <person name="Yamada K."/>
            <person name="Lim J."/>
            <person name="Dale J.M."/>
            <person name="Chen H."/>
            <person name="Shinn P."/>
            <person name="Palm C.J."/>
            <person name="Southwick A.M."/>
            <person name="Wu H.C."/>
            <person name="Kim C.J."/>
            <person name="Nguyen M."/>
            <person name="Pham P.K."/>
            <person name="Cheuk R.F."/>
            <person name="Karlin-Newmann G."/>
            <person name="Liu S.X."/>
            <person name="Lam B."/>
            <person name="Sakano H."/>
            <person name="Wu T."/>
            <person name="Yu G."/>
            <person name="Miranda M."/>
            <person name="Quach H.L."/>
            <person name="Tripp M."/>
            <person name="Chang C.H."/>
            <person name="Lee J.M."/>
            <person name="Toriumi M.J."/>
            <person name="Chan M.M."/>
            <person name="Tang C.C."/>
            <person name="Onodera C.S."/>
            <person name="Deng J.M."/>
            <person name="Akiyama K."/>
            <person name="Ansari Y."/>
            <person name="Arakawa T."/>
            <person name="Banh J."/>
            <person name="Banno F."/>
            <person name="Bowser L."/>
            <person name="Brooks S.Y."/>
            <person name="Carninci P."/>
            <person name="Chao Q."/>
            <person name="Choy N."/>
            <person name="Enju A."/>
            <person name="Goldsmith A.D."/>
            <person name="Gurjal M."/>
            <person name="Hansen N.F."/>
            <person name="Hayashizaki Y."/>
            <person name="Johnson-Hopson C."/>
            <person name="Hsuan V.W."/>
            <person name="Iida K."/>
            <person name="Karnes M."/>
            <person name="Khan S."/>
            <person name="Koesema E."/>
            <person name="Ishida J."/>
            <person name="Jiang P.X."/>
            <person name="Jones T."/>
            <person name="Kawai J."/>
            <person name="Kamiya A."/>
            <person name="Meyers C."/>
            <person name="Nakajima M."/>
            <person name="Narusaka M."/>
            <person name="Seki M."/>
            <person name="Sakurai T."/>
            <person name="Satou M."/>
            <person name="Tamse R."/>
            <person name="Vaysberg M."/>
            <person name="Wallender E.K."/>
            <person name="Wong C."/>
            <person name="Yamamura Y."/>
            <person name="Yuan S."/>
            <person name="Shinozaki K."/>
            <person name="Davis R.W."/>
            <person name="Theologis A."/>
            <person name="Ecker J.R."/>
        </authorList>
    </citation>
    <scope>NUCLEOTIDE SEQUENCE [LARGE SCALE MRNA] (ISOFORM 1)</scope>
    <source>
        <strain>cv. Columbia</strain>
    </source>
</reference>
<feature type="signal peptide" evidence="1">
    <location>
        <begin position="1"/>
        <end position="26"/>
    </location>
</feature>
<feature type="chain" id="PRO_0000252125" description="Uncharacterized GPI-anchored protein At1g61900">
    <location>
        <begin position="27"/>
        <end position="405"/>
    </location>
</feature>
<feature type="propeptide" id="PRO_0000252126" description="Removed in mature form" evidence="1">
    <location>
        <begin position="406"/>
        <end position="433"/>
    </location>
</feature>
<feature type="lipid moiety-binding region" description="GPI-anchor amidated alanine" evidence="1">
    <location>
        <position position="405"/>
    </location>
</feature>
<feature type="glycosylation site" description="N-linked (GlcNAc...) asparagine" evidence="1">
    <location>
        <position position="59"/>
    </location>
</feature>
<feature type="glycosylation site" description="N-linked (GlcNAc...) asparagine" evidence="1">
    <location>
        <position position="72"/>
    </location>
</feature>
<feature type="glycosylation site" description="N-linked (GlcNAc...) asparagine" evidence="1">
    <location>
        <position position="125"/>
    </location>
</feature>
<feature type="glycosylation site" description="N-linked (GlcNAc...) asparagine" evidence="1">
    <location>
        <position position="159"/>
    </location>
</feature>
<feature type="glycosylation site" description="N-linked (GlcNAc...) asparagine" evidence="1">
    <location>
        <position position="210"/>
    </location>
</feature>
<feature type="glycosylation site" description="N-linked (GlcNAc...) asparagine" evidence="1">
    <location>
        <position position="275"/>
    </location>
</feature>
<feature type="glycosylation site" description="N-linked (GlcNAc...) asparagine" evidence="1">
    <location>
        <position position="282"/>
    </location>
</feature>
<feature type="glycosylation site" description="N-linked (GlcNAc...) asparagine" evidence="1">
    <location>
        <position position="323"/>
    </location>
</feature>
<feature type="splice variant" id="VSP_020875" description="In isoform 2." evidence="2">
    <original>PVRIPALPAAASSQPRLHDEGVTRLVIFVLSMLLVMLLS</original>
    <variation>QFLLFQLLPPRNLVSTMKE</variation>
    <location>
        <begin position="395"/>
        <end position="433"/>
    </location>
</feature>
<gene>
    <name type="ordered locus">At1g61900</name>
    <name type="ORF">F8K4.10</name>
</gene>
<accession>Q8GUI4</accession>
<accession>O80696</accession>
<accession>Q3ECK6</accession>
<comment type="subcellular location">
    <subcellularLocation>
        <location>Cell membrane</location>
        <topology>Lipid-anchor</topology>
        <topology>GPI-anchor</topology>
    </subcellularLocation>
</comment>
<comment type="alternative products">
    <event type="alternative splicing"/>
    <isoform>
        <id>Q8GUI4-1</id>
        <name>1</name>
        <sequence type="displayed"/>
    </isoform>
    <isoform>
        <id>Q8GUI4-2</id>
        <name>2</name>
        <sequence type="described" ref="VSP_020875"/>
    </isoform>
</comment>
<proteinExistence type="evidence at transcript level"/>
<protein>
    <recommendedName>
        <fullName>Uncharacterized GPI-anchored protein At1g61900</fullName>
    </recommendedName>
</protein>
<keyword id="KW-0025">Alternative splicing</keyword>
<keyword id="KW-1003">Cell membrane</keyword>
<keyword id="KW-0325">Glycoprotein</keyword>
<keyword id="KW-0336">GPI-anchor</keyword>
<keyword id="KW-0449">Lipoprotein</keyword>
<keyword id="KW-0472">Membrane</keyword>
<keyword id="KW-1185">Reference proteome</keyword>
<keyword id="KW-0732">Signal</keyword>
<name>UGPI6_ARATH</name>
<evidence type="ECO:0000255" key="1"/>
<evidence type="ECO:0000305" key="2"/>
<dbReference type="EMBL" id="AC004392">
    <property type="protein sequence ID" value="AAC28508.1"/>
    <property type="molecule type" value="Genomic_DNA"/>
</dbReference>
<dbReference type="EMBL" id="CP002684">
    <property type="protein sequence ID" value="AEE33900.1"/>
    <property type="molecule type" value="Genomic_DNA"/>
</dbReference>
<dbReference type="EMBL" id="CP002684">
    <property type="protein sequence ID" value="AEE33901.1"/>
    <property type="molecule type" value="Genomic_DNA"/>
</dbReference>
<dbReference type="EMBL" id="BT002490">
    <property type="protein sequence ID" value="AAO00850.1"/>
    <property type="molecule type" value="mRNA"/>
</dbReference>
<dbReference type="EMBL" id="AK230285">
    <property type="protein sequence ID" value="BAF02087.1"/>
    <property type="molecule type" value="mRNA"/>
</dbReference>
<dbReference type="EMBL" id="BT006577">
    <property type="protein sequence ID" value="AAP31921.1"/>
    <property type="molecule type" value="mRNA"/>
</dbReference>
<dbReference type="PIR" id="T02135">
    <property type="entry name" value="T02135"/>
</dbReference>
<dbReference type="RefSeq" id="NP_176382.2">
    <molecule id="Q8GUI4-1"/>
    <property type="nucleotide sequence ID" value="NM_104871.3"/>
</dbReference>
<dbReference type="RefSeq" id="NP_974068.1">
    <molecule id="Q8GUI4-2"/>
    <property type="nucleotide sequence ID" value="NM_202339.1"/>
</dbReference>
<dbReference type="BioGRID" id="27709">
    <property type="interactions" value="1"/>
</dbReference>
<dbReference type="FunCoup" id="Q8GUI4">
    <property type="interactions" value="1009"/>
</dbReference>
<dbReference type="STRING" id="3702.Q8GUI4"/>
<dbReference type="GlyGen" id="Q8GUI4">
    <property type="glycosylation" value="8 sites"/>
</dbReference>
<dbReference type="PaxDb" id="3702-AT1G61900.1"/>
<dbReference type="ProteomicsDB" id="245299">
    <molecule id="Q8GUI4-1"/>
</dbReference>
<dbReference type="EnsemblPlants" id="AT1G61900.1">
    <molecule id="Q8GUI4-1"/>
    <property type="protein sequence ID" value="AT1G61900.1"/>
    <property type="gene ID" value="AT1G61900"/>
</dbReference>
<dbReference type="EnsemblPlants" id="AT1G61900.2">
    <molecule id="Q8GUI4-2"/>
    <property type="protein sequence ID" value="AT1G61900.2"/>
    <property type="gene ID" value="AT1G61900"/>
</dbReference>
<dbReference type="GeneID" id="842486"/>
<dbReference type="Gramene" id="AT1G61900.1">
    <molecule id="Q8GUI4-1"/>
    <property type="protein sequence ID" value="AT1G61900.1"/>
    <property type="gene ID" value="AT1G61900"/>
</dbReference>
<dbReference type="Gramene" id="AT1G61900.2">
    <molecule id="Q8GUI4-2"/>
    <property type="protein sequence ID" value="AT1G61900.2"/>
    <property type="gene ID" value="AT1G61900"/>
</dbReference>
<dbReference type="KEGG" id="ath:AT1G61900"/>
<dbReference type="Araport" id="AT1G61900"/>
<dbReference type="TAIR" id="AT1G61900"/>
<dbReference type="eggNOG" id="ENOG502QXGE">
    <property type="taxonomic scope" value="Eukaryota"/>
</dbReference>
<dbReference type="InParanoid" id="Q8GUI4"/>
<dbReference type="OMA" id="SCCKAMD"/>
<dbReference type="PhylomeDB" id="Q8GUI4"/>
<dbReference type="PRO" id="PR:Q8GUI4"/>
<dbReference type="Proteomes" id="UP000006548">
    <property type="component" value="Chromosome 1"/>
</dbReference>
<dbReference type="ExpressionAtlas" id="Q8GUI4">
    <property type="expression patterns" value="baseline and differential"/>
</dbReference>
<dbReference type="GO" id="GO:0005634">
    <property type="term" value="C:nucleus"/>
    <property type="evidence" value="ECO:0007005"/>
    <property type="project" value="TAIR"/>
</dbReference>
<dbReference type="GO" id="GO:0005886">
    <property type="term" value="C:plasma membrane"/>
    <property type="evidence" value="ECO:0007669"/>
    <property type="project" value="UniProtKB-SubCell"/>
</dbReference>
<dbReference type="GO" id="GO:0009506">
    <property type="term" value="C:plasmodesma"/>
    <property type="evidence" value="ECO:0007005"/>
    <property type="project" value="TAIR"/>
</dbReference>
<dbReference type="GO" id="GO:0098552">
    <property type="term" value="C:side of membrane"/>
    <property type="evidence" value="ECO:0007669"/>
    <property type="project" value="UniProtKB-KW"/>
</dbReference>
<dbReference type="InterPro" id="IPR040336">
    <property type="entry name" value="At1g61900-like"/>
</dbReference>
<dbReference type="InterPro" id="IPR043891">
    <property type="entry name" value="SPARK"/>
</dbReference>
<dbReference type="PANTHER" id="PTHR33831">
    <property type="entry name" value="GPI-ANCHORED PROTEIN"/>
    <property type="match status" value="1"/>
</dbReference>
<dbReference type="PANTHER" id="PTHR33831:SF5">
    <property type="entry name" value="OS07G0102300 PROTEIN"/>
    <property type="match status" value="1"/>
</dbReference>
<dbReference type="Pfam" id="PF19160">
    <property type="entry name" value="SPARK"/>
    <property type="match status" value="1"/>
</dbReference>